<reference evidence="3" key="1">
    <citation type="journal article" date="2012" name="Glycobiology">
        <title>Proteoglycans from Boswellia serrata Roxb. and B. carteri Birdw. and identification of a proteolytic plant basic secretory protein.</title>
        <authorList>
            <person name="Herrmann A."/>
            <person name="Konig S."/>
            <person name="Lechtenberg M."/>
            <person name="Sehlbach M."/>
            <person name="Vakhrushev S.Y."/>
            <person name="Peter-Katalinic J."/>
            <person name="Hensel A."/>
        </authorList>
    </citation>
    <scope>PROTEIN SEQUENCE</scope>
    <scope>FUNCTION</scope>
    <scope>COFACTOR</scope>
    <scope>ACTIVITY REGULATION</scope>
    <scope>GLYCOSYLATION</scope>
    <source>
        <tissue evidence="1">Resin</tissue>
    </source>
</reference>
<sequence>YSLQNDPEITLIDSTIEWDEGYDVTARFLDYLNSLDAGFVAELENKTVEQLWSEYKASYGPNGQ</sequence>
<evidence type="ECO:0000269" key="1">
    <source>
    </source>
</evidence>
<evidence type="ECO:0000303" key="2">
    <source>
    </source>
</evidence>
<evidence type="ECO:0000305" key="3"/>
<dbReference type="EC" id="3.4.24.-" evidence="1"/>
<dbReference type="GO" id="GO:0046872">
    <property type="term" value="F:metal ion binding"/>
    <property type="evidence" value="ECO:0007669"/>
    <property type="project" value="UniProtKB-KW"/>
</dbReference>
<dbReference type="GO" id="GO:0008237">
    <property type="term" value="F:metallopeptidase activity"/>
    <property type="evidence" value="ECO:0007669"/>
    <property type="project" value="UniProtKB-KW"/>
</dbReference>
<dbReference type="GO" id="GO:0006508">
    <property type="term" value="P:proteolysis"/>
    <property type="evidence" value="ECO:0007669"/>
    <property type="project" value="UniProtKB-KW"/>
</dbReference>
<dbReference type="InterPro" id="IPR007541">
    <property type="entry name" value="Uncharacterised_BSP"/>
</dbReference>
<dbReference type="Pfam" id="PF04450">
    <property type="entry name" value="BSP"/>
    <property type="match status" value="1"/>
</dbReference>
<accession>C0HJG8</accession>
<feature type="chain" id="PRO_0000425701" description="Basic secretory protease">
    <location>
        <begin position="1" status="less than"/>
        <end position="64" status="greater than"/>
    </location>
</feature>
<feature type="non-consecutive residues" evidence="2">
    <location>
        <begin position="5"/>
        <end position="6"/>
    </location>
</feature>
<feature type="non-consecutive residues" evidence="2">
    <location>
        <begin position="8"/>
        <end position="9"/>
    </location>
</feature>
<feature type="non-consecutive residues" evidence="2">
    <location>
        <begin position="17"/>
        <end position="18"/>
    </location>
</feature>
<feature type="non-consecutive residues" evidence="2">
    <location>
        <begin position="46"/>
        <end position="47"/>
    </location>
</feature>
<feature type="non-terminal residue" evidence="2">
    <location>
        <position position="1"/>
    </location>
</feature>
<feature type="non-terminal residue" evidence="2">
    <location>
        <position position="64"/>
    </location>
</feature>
<protein>
    <recommendedName>
        <fullName evidence="2">Basic secretory protease</fullName>
        <ecNumber evidence="1">3.4.24.-</ecNumber>
    </recommendedName>
    <alternativeName>
        <fullName evidence="2">Boswellia basic secretory protease</fullName>
        <shortName evidence="2">BBSP</shortName>
    </alternativeName>
</protein>
<organism>
    <name type="scientific">Boswellia serrata</name>
    <name type="common">Indian frankincense</name>
    <dbReference type="NCBI Taxonomy" id="613112"/>
    <lineage>
        <taxon>Eukaryota</taxon>
        <taxon>Viridiplantae</taxon>
        <taxon>Streptophyta</taxon>
        <taxon>Embryophyta</taxon>
        <taxon>Tracheophyta</taxon>
        <taxon>Spermatophyta</taxon>
        <taxon>Magnoliopsida</taxon>
        <taxon>eudicotyledons</taxon>
        <taxon>Gunneridae</taxon>
        <taxon>Pentapetalae</taxon>
        <taxon>rosids</taxon>
        <taxon>malvids</taxon>
        <taxon>Sapindales</taxon>
        <taxon>Burseraceae</taxon>
        <taxon>Boswellia</taxon>
    </lineage>
</organism>
<name>BSP_BOSSE</name>
<comment type="function">
    <text evidence="1">Metalloprotease, digests gelatin and azocasein (in vitro).</text>
</comment>
<comment type="cofactor">
    <cofactor evidence="1">
        <name>a divalent metal cation</name>
        <dbReference type="ChEBI" id="CHEBI:60240"/>
    </cofactor>
</comment>
<comment type="activity regulation">
    <text evidence="1">Inhibited by EDTA.</text>
</comment>
<comment type="PTM">
    <text evidence="1">Glycosylated.</text>
</comment>
<proteinExistence type="evidence at protein level"/>
<keyword id="KW-0903">Direct protein sequencing</keyword>
<keyword id="KW-0325">Glycoprotein</keyword>
<keyword id="KW-0378">Hydrolase</keyword>
<keyword id="KW-0479">Metal-binding</keyword>
<keyword id="KW-0482">Metalloprotease</keyword>
<keyword id="KW-0645">Protease</keyword>